<sequence>MLILQKLFDSVKIEIKNSHTIDKLDHIRIKYLGKKGIFSNLIKDLKNFSLEERKKYFIIFNEIKKKTINQINKKKIELNKIILDKQIEKEKIDVSLPGRRIKNGVIHPINHTITYIKNFFSKLGFESISGFEIEDEYHNFDALNIPKDHPARNIHDTFWFDENRLLRTQTSSMQIRIMKKEKPPIRLIFPGKVYRNDYDSTHTPMFHQVEGLIVEKNINFSNLKWIIYNFLRNFFHKDIAIRFRPSYFPFTTPSAEVDVVTNNGKLLEVLGCGMVHPSVLKNVNIDSNFYSACAFGIGIERITMLRYGISDLRSFFENDIRFIKQFKHI</sequence>
<dbReference type="EC" id="6.1.1.20"/>
<dbReference type="EMBL" id="AE013218">
    <property type="protein sequence ID" value="AAM67689.1"/>
    <property type="molecule type" value="Genomic_DNA"/>
</dbReference>
<dbReference type="RefSeq" id="WP_011053656.1">
    <property type="nucleotide sequence ID" value="NC_004061.1"/>
</dbReference>
<dbReference type="SMR" id="P59056"/>
<dbReference type="STRING" id="198804.BUsg_121"/>
<dbReference type="GeneID" id="93003591"/>
<dbReference type="KEGG" id="bas:BUsg_121"/>
<dbReference type="eggNOG" id="COG0016">
    <property type="taxonomic scope" value="Bacteria"/>
</dbReference>
<dbReference type="HOGENOM" id="CLU_025086_0_1_6"/>
<dbReference type="Proteomes" id="UP000000416">
    <property type="component" value="Chromosome"/>
</dbReference>
<dbReference type="GO" id="GO:0005737">
    <property type="term" value="C:cytoplasm"/>
    <property type="evidence" value="ECO:0007669"/>
    <property type="project" value="UniProtKB-SubCell"/>
</dbReference>
<dbReference type="GO" id="GO:0005524">
    <property type="term" value="F:ATP binding"/>
    <property type="evidence" value="ECO:0007669"/>
    <property type="project" value="UniProtKB-UniRule"/>
</dbReference>
<dbReference type="GO" id="GO:0000287">
    <property type="term" value="F:magnesium ion binding"/>
    <property type="evidence" value="ECO:0007669"/>
    <property type="project" value="UniProtKB-UniRule"/>
</dbReference>
<dbReference type="GO" id="GO:0004826">
    <property type="term" value="F:phenylalanine-tRNA ligase activity"/>
    <property type="evidence" value="ECO:0007669"/>
    <property type="project" value="UniProtKB-UniRule"/>
</dbReference>
<dbReference type="GO" id="GO:0000049">
    <property type="term" value="F:tRNA binding"/>
    <property type="evidence" value="ECO:0007669"/>
    <property type="project" value="InterPro"/>
</dbReference>
<dbReference type="GO" id="GO:0006432">
    <property type="term" value="P:phenylalanyl-tRNA aminoacylation"/>
    <property type="evidence" value="ECO:0007669"/>
    <property type="project" value="UniProtKB-UniRule"/>
</dbReference>
<dbReference type="CDD" id="cd00496">
    <property type="entry name" value="PheRS_alpha_core"/>
    <property type="match status" value="1"/>
</dbReference>
<dbReference type="FunFam" id="3.30.930.10:FF:000003">
    <property type="entry name" value="Phenylalanine--tRNA ligase alpha subunit"/>
    <property type="match status" value="1"/>
</dbReference>
<dbReference type="Gene3D" id="3.30.930.10">
    <property type="entry name" value="Bira Bifunctional Protein, Domain 2"/>
    <property type="match status" value="1"/>
</dbReference>
<dbReference type="HAMAP" id="MF_00281">
    <property type="entry name" value="Phe_tRNA_synth_alpha1"/>
    <property type="match status" value="1"/>
</dbReference>
<dbReference type="InterPro" id="IPR006195">
    <property type="entry name" value="aa-tRNA-synth_II"/>
</dbReference>
<dbReference type="InterPro" id="IPR045864">
    <property type="entry name" value="aa-tRNA-synth_II/BPL/LPL"/>
</dbReference>
<dbReference type="InterPro" id="IPR004529">
    <property type="entry name" value="Phe-tRNA-synth_IIc_asu"/>
</dbReference>
<dbReference type="InterPro" id="IPR004188">
    <property type="entry name" value="Phe-tRNA_ligase_II_N"/>
</dbReference>
<dbReference type="InterPro" id="IPR022911">
    <property type="entry name" value="Phe_tRNA_ligase_alpha1_bac"/>
</dbReference>
<dbReference type="InterPro" id="IPR002319">
    <property type="entry name" value="Phenylalanyl-tRNA_Synthase"/>
</dbReference>
<dbReference type="InterPro" id="IPR010978">
    <property type="entry name" value="tRNA-bd_arm"/>
</dbReference>
<dbReference type="NCBIfam" id="TIGR00468">
    <property type="entry name" value="pheS"/>
    <property type="match status" value="1"/>
</dbReference>
<dbReference type="PANTHER" id="PTHR11538:SF41">
    <property type="entry name" value="PHENYLALANINE--TRNA LIGASE, MITOCHONDRIAL"/>
    <property type="match status" value="1"/>
</dbReference>
<dbReference type="PANTHER" id="PTHR11538">
    <property type="entry name" value="PHENYLALANYL-TRNA SYNTHETASE"/>
    <property type="match status" value="1"/>
</dbReference>
<dbReference type="Pfam" id="PF02912">
    <property type="entry name" value="Phe_tRNA-synt_N"/>
    <property type="match status" value="1"/>
</dbReference>
<dbReference type="Pfam" id="PF01409">
    <property type="entry name" value="tRNA-synt_2d"/>
    <property type="match status" value="1"/>
</dbReference>
<dbReference type="SUPFAM" id="SSF55681">
    <property type="entry name" value="Class II aaRS and biotin synthetases"/>
    <property type="match status" value="1"/>
</dbReference>
<dbReference type="SUPFAM" id="SSF46589">
    <property type="entry name" value="tRNA-binding arm"/>
    <property type="match status" value="1"/>
</dbReference>
<dbReference type="PROSITE" id="PS50862">
    <property type="entry name" value="AA_TRNA_LIGASE_II"/>
    <property type="match status" value="1"/>
</dbReference>
<gene>
    <name type="primary">pheS</name>
    <name type="ordered locus">BUsg_121</name>
</gene>
<keyword id="KW-0030">Aminoacyl-tRNA synthetase</keyword>
<keyword id="KW-0067">ATP-binding</keyword>
<keyword id="KW-0963">Cytoplasm</keyword>
<keyword id="KW-0436">Ligase</keyword>
<keyword id="KW-0460">Magnesium</keyword>
<keyword id="KW-0479">Metal-binding</keyword>
<keyword id="KW-0547">Nucleotide-binding</keyword>
<keyword id="KW-0648">Protein biosynthesis</keyword>
<accession>P59056</accession>
<comment type="catalytic activity">
    <reaction>
        <text>tRNA(Phe) + L-phenylalanine + ATP = L-phenylalanyl-tRNA(Phe) + AMP + diphosphate + H(+)</text>
        <dbReference type="Rhea" id="RHEA:19413"/>
        <dbReference type="Rhea" id="RHEA-COMP:9668"/>
        <dbReference type="Rhea" id="RHEA-COMP:9699"/>
        <dbReference type="ChEBI" id="CHEBI:15378"/>
        <dbReference type="ChEBI" id="CHEBI:30616"/>
        <dbReference type="ChEBI" id="CHEBI:33019"/>
        <dbReference type="ChEBI" id="CHEBI:58095"/>
        <dbReference type="ChEBI" id="CHEBI:78442"/>
        <dbReference type="ChEBI" id="CHEBI:78531"/>
        <dbReference type="ChEBI" id="CHEBI:456215"/>
        <dbReference type="EC" id="6.1.1.20"/>
    </reaction>
</comment>
<comment type="cofactor">
    <cofactor evidence="2">
        <name>Mg(2+)</name>
        <dbReference type="ChEBI" id="CHEBI:18420"/>
    </cofactor>
    <text evidence="2">Binds 2 magnesium ions per tetramer.</text>
</comment>
<comment type="subunit">
    <text evidence="1">Tetramer of two alpha and two beta subunits.</text>
</comment>
<comment type="subcellular location">
    <subcellularLocation>
        <location evidence="1">Cytoplasm</location>
    </subcellularLocation>
</comment>
<comment type="similarity">
    <text evidence="2">Belongs to the class-II aminoacyl-tRNA synthetase family. Phe-tRNA synthetase alpha subunit type 1 subfamily.</text>
</comment>
<comment type="caution">
    <text evidence="2">Lacks the conserved glutamate residue that binds magnesium.</text>
</comment>
<protein>
    <recommendedName>
        <fullName>Phenylalanine--tRNA ligase alpha subunit</fullName>
        <ecNumber>6.1.1.20</ecNumber>
    </recommendedName>
    <alternativeName>
        <fullName>Phenylalanyl-tRNA synthetase alpha subunit</fullName>
        <shortName>PheRS</shortName>
    </alternativeName>
</protein>
<name>SYFA_BUCAP</name>
<feature type="chain" id="PRO_0000126677" description="Phenylalanine--tRNA ligase alpha subunit">
    <location>
        <begin position="1"/>
        <end position="329"/>
    </location>
</feature>
<organism>
    <name type="scientific">Buchnera aphidicola subsp. Schizaphis graminum (strain Sg)</name>
    <dbReference type="NCBI Taxonomy" id="198804"/>
    <lineage>
        <taxon>Bacteria</taxon>
        <taxon>Pseudomonadati</taxon>
        <taxon>Pseudomonadota</taxon>
        <taxon>Gammaproteobacteria</taxon>
        <taxon>Enterobacterales</taxon>
        <taxon>Erwiniaceae</taxon>
        <taxon>Buchnera</taxon>
    </lineage>
</organism>
<evidence type="ECO:0000250" key="1"/>
<evidence type="ECO:0000305" key="2"/>
<reference key="1">
    <citation type="journal article" date="2002" name="Science">
        <title>50 million years of genomic stasis in endosymbiotic bacteria.</title>
        <authorList>
            <person name="Tamas I."/>
            <person name="Klasson L."/>
            <person name="Canbaeck B."/>
            <person name="Naeslund A.K."/>
            <person name="Eriksson A.-S."/>
            <person name="Wernegreen J.J."/>
            <person name="Sandstroem J.P."/>
            <person name="Moran N.A."/>
            <person name="Andersson S.G.E."/>
        </authorList>
    </citation>
    <scope>NUCLEOTIDE SEQUENCE [LARGE SCALE GENOMIC DNA]</scope>
    <source>
        <strain>Sg</strain>
    </source>
</reference>
<proteinExistence type="inferred from homology"/>